<reference key="1">
    <citation type="journal article" date="2005" name="Nature">
        <title>The genome of the social amoeba Dictyostelium discoideum.</title>
        <authorList>
            <person name="Eichinger L."/>
            <person name="Pachebat J.A."/>
            <person name="Gloeckner G."/>
            <person name="Rajandream M.A."/>
            <person name="Sucgang R."/>
            <person name="Berriman M."/>
            <person name="Song J."/>
            <person name="Olsen R."/>
            <person name="Szafranski K."/>
            <person name="Xu Q."/>
            <person name="Tunggal B."/>
            <person name="Kummerfeld S."/>
            <person name="Madera M."/>
            <person name="Konfortov B.A."/>
            <person name="Rivero F."/>
            <person name="Bankier A.T."/>
            <person name="Lehmann R."/>
            <person name="Hamlin N."/>
            <person name="Davies R."/>
            <person name="Gaudet P."/>
            <person name="Fey P."/>
            <person name="Pilcher K."/>
            <person name="Chen G."/>
            <person name="Saunders D."/>
            <person name="Sodergren E.J."/>
            <person name="Davis P."/>
            <person name="Kerhornou A."/>
            <person name="Nie X."/>
            <person name="Hall N."/>
            <person name="Anjard C."/>
            <person name="Hemphill L."/>
            <person name="Bason N."/>
            <person name="Farbrother P."/>
            <person name="Desany B."/>
            <person name="Just E."/>
            <person name="Morio T."/>
            <person name="Rost R."/>
            <person name="Churcher C.M."/>
            <person name="Cooper J."/>
            <person name="Haydock S."/>
            <person name="van Driessche N."/>
            <person name="Cronin A."/>
            <person name="Goodhead I."/>
            <person name="Muzny D.M."/>
            <person name="Mourier T."/>
            <person name="Pain A."/>
            <person name="Lu M."/>
            <person name="Harper D."/>
            <person name="Lindsay R."/>
            <person name="Hauser H."/>
            <person name="James K.D."/>
            <person name="Quiles M."/>
            <person name="Madan Babu M."/>
            <person name="Saito T."/>
            <person name="Buchrieser C."/>
            <person name="Wardroper A."/>
            <person name="Felder M."/>
            <person name="Thangavelu M."/>
            <person name="Johnson D."/>
            <person name="Knights A."/>
            <person name="Loulseged H."/>
            <person name="Mungall K.L."/>
            <person name="Oliver K."/>
            <person name="Price C."/>
            <person name="Quail M.A."/>
            <person name="Urushihara H."/>
            <person name="Hernandez J."/>
            <person name="Rabbinowitsch E."/>
            <person name="Steffen D."/>
            <person name="Sanders M."/>
            <person name="Ma J."/>
            <person name="Kohara Y."/>
            <person name="Sharp S."/>
            <person name="Simmonds M.N."/>
            <person name="Spiegler S."/>
            <person name="Tivey A."/>
            <person name="Sugano S."/>
            <person name="White B."/>
            <person name="Walker D."/>
            <person name="Woodward J.R."/>
            <person name="Winckler T."/>
            <person name="Tanaka Y."/>
            <person name="Shaulsky G."/>
            <person name="Schleicher M."/>
            <person name="Weinstock G.M."/>
            <person name="Rosenthal A."/>
            <person name="Cox E.C."/>
            <person name="Chisholm R.L."/>
            <person name="Gibbs R.A."/>
            <person name="Loomis W.F."/>
            <person name="Platzer M."/>
            <person name="Kay R.R."/>
            <person name="Williams J.G."/>
            <person name="Dear P.H."/>
            <person name="Noegel A.A."/>
            <person name="Barrell B.G."/>
            <person name="Kuspa A."/>
        </authorList>
    </citation>
    <scope>NUCLEOTIDE SEQUENCE [LARGE SCALE GENOMIC DNA]</scope>
    <source>
        <strain>AX4</strain>
    </source>
</reference>
<dbReference type="EMBL" id="AAFI02000058">
    <property type="protein sequence ID" value="EAL65465.1"/>
    <property type="molecule type" value="Genomic_DNA"/>
</dbReference>
<dbReference type="RefSeq" id="XP_638825.1">
    <property type="nucleotide sequence ID" value="XM_633733.1"/>
</dbReference>
<dbReference type="FunCoup" id="Q54QB9">
    <property type="interactions" value="197"/>
</dbReference>
<dbReference type="STRING" id="44689.Q54QB9"/>
<dbReference type="GlyGen" id="Q54QB9">
    <property type="glycosylation" value="1 site"/>
</dbReference>
<dbReference type="PaxDb" id="44689-DDB0233879"/>
<dbReference type="EnsemblProtists" id="EAL65465">
    <property type="protein sequence ID" value="EAL65465"/>
    <property type="gene ID" value="DDB_G0283955"/>
</dbReference>
<dbReference type="GeneID" id="8624349"/>
<dbReference type="KEGG" id="ddi:DDB_G0283955"/>
<dbReference type="dictyBase" id="DDB_G0283955">
    <property type="gene designation" value="gacG"/>
</dbReference>
<dbReference type="VEuPathDB" id="AmoebaDB:DDB_G0283955"/>
<dbReference type="eggNOG" id="KOG4270">
    <property type="taxonomic scope" value="Eukaryota"/>
</dbReference>
<dbReference type="HOGENOM" id="CLU_260635_0_0_1"/>
<dbReference type="InParanoid" id="Q54QB9"/>
<dbReference type="OMA" id="YSHIDRE"/>
<dbReference type="Reactome" id="R-DDI-9013148">
    <property type="pathway name" value="CDC42 GTPase cycle"/>
</dbReference>
<dbReference type="Reactome" id="R-DDI-9013149">
    <property type="pathway name" value="RAC1 GTPase cycle"/>
</dbReference>
<dbReference type="Reactome" id="R-DDI-9013404">
    <property type="pathway name" value="RAC2 GTPase cycle"/>
</dbReference>
<dbReference type="Reactome" id="R-DDI-9013406">
    <property type="pathway name" value="RHOQ GTPase cycle"/>
</dbReference>
<dbReference type="Reactome" id="R-DDI-9013423">
    <property type="pathway name" value="RAC3 GTPase cycle"/>
</dbReference>
<dbReference type="PRO" id="PR:Q54QB9"/>
<dbReference type="Proteomes" id="UP000002195">
    <property type="component" value="Chromosome 4"/>
</dbReference>
<dbReference type="GO" id="GO:0005737">
    <property type="term" value="C:cytoplasm"/>
    <property type="evidence" value="ECO:0007669"/>
    <property type="project" value="UniProtKB-SubCell"/>
</dbReference>
<dbReference type="GO" id="GO:0005886">
    <property type="term" value="C:plasma membrane"/>
    <property type="evidence" value="ECO:0000318"/>
    <property type="project" value="GO_Central"/>
</dbReference>
<dbReference type="GO" id="GO:0005096">
    <property type="term" value="F:GTPase activator activity"/>
    <property type="evidence" value="ECO:0000318"/>
    <property type="project" value="GO_Central"/>
</dbReference>
<dbReference type="GO" id="GO:0043326">
    <property type="term" value="P:chemotaxis to folate"/>
    <property type="evidence" value="ECO:0000315"/>
    <property type="project" value="dictyBase"/>
</dbReference>
<dbReference type="GO" id="GO:0051058">
    <property type="term" value="P:negative regulation of small GTPase mediated signal transduction"/>
    <property type="evidence" value="ECO:0000318"/>
    <property type="project" value="GO_Central"/>
</dbReference>
<dbReference type="GO" id="GO:1905303">
    <property type="term" value="P:positive regulation of macropinocytosis"/>
    <property type="evidence" value="ECO:0000315"/>
    <property type="project" value="dictyBase"/>
</dbReference>
<dbReference type="GO" id="GO:0032956">
    <property type="term" value="P:regulation of actin cytoskeleton organization"/>
    <property type="evidence" value="ECO:0000318"/>
    <property type="project" value="GO_Central"/>
</dbReference>
<dbReference type="GO" id="GO:0035020">
    <property type="term" value="P:regulation of Rac protein signal transduction"/>
    <property type="evidence" value="ECO:0000318"/>
    <property type="project" value="GO_Central"/>
</dbReference>
<dbReference type="GO" id="GO:1903013">
    <property type="term" value="P:response to differentiation-inducing factor 1"/>
    <property type="evidence" value="ECO:0007005"/>
    <property type="project" value="dictyBase"/>
</dbReference>
<dbReference type="GO" id="GO:0007165">
    <property type="term" value="P:signal transduction"/>
    <property type="evidence" value="ECO:0007669"/>
    <property type="project" value="InterPro"/>
</dbReference>
<dbReference type="CDD" id="cd00159">
    <property type="entry name" value="RhoGAP"/>
    <property type="match status" value="1"/>
</dbReference>
<dbReference type="Gene3D" id="3.10.20.90">
    <property type="entry name" value="Phosphatidylinositol 3-kinase Catalytic Subunit, Chain A, domain 1"/>
    <property type="match status" value="1"/>
</dbReference>
<dbReference type="Gene3D" id="1.10.555.10">
    <property type="entry name" value="Rho GTPase activation protein"/>
    <property type="match status" value="1"/>
</dbReference>
<dbReference type="InterPro" id="IPR032425">
    <property type="entry name" value="FERM_f0"/>
</dbReference>
<dbReference type="InterPro" id="IPR047165">
    <property type="entry name" value="RHG17/44/SH3BP1-like"/>
</dbReference>
<dbReference type="InterPro" id="IPR008936">
    <property type="entry name" value="Rho_GTPase_activation_prot"/>
</dbReference>
<dbReference type="InterPro" id="IPR000198">
    <property type="entry name" value="RhoGAP_dom"/>
</dbReference>
<dbReference type="PANTHER" id="PTHR14130">
    <property type="entry name" value="3BP-1 RELATED RHOGAP"/>
    <property type="match status" value="1"/>
</dbReference>
<dbReference type="PANTHER" id="PTHR14130:SF14">
    <property type="entry name" value="RHO GTPASE-ACTIVATING PROTEIN 92B"/>
    <property type="match status" value="1"/>
</dbReference>
<dbReference type="Pfam" id="PF16511">
    <property type="entry name" value="FERM_f0"/>
    <property type="match status" value="1"/>
</dbReference>
<dbReference type="Pfam" id="PF00620">
    <property type="entry name" value="RhoGAP"/>
    <property type="match status" value="1"/>
</dbReference>
<dbReference type="SMART" id="SM00324">
    <property type="entry name" value="RhoGAP"/>
    <property type="match status" value="1"/>
</dbReference>
<dbReference type="SUPFAM" id="SSF48350">
    <property type="entry name" value="GTPase activation domain, GAP"/>
    <property type="match status" value="1"/>
</dbReference>
<dbReference type="PROSITE" id="PS50238">
    <property type="entry name" value="RHOGAP"/>
    <property type="match status" value="1"/>
</dbReference>
<accession>Q54QB9</accession>
<proteinExistence type="inferred from homology"/>
<keyword id="KW-0963">Cytoplasm</keyword>
<keyword id="KW-0343">GTPase activation</keyword>
<keyword id="KW-1185">Reference proteome</keyword>
<name>GACG_DICDI</name>
<comment type="function">
    <text evidence="1">Rho GTPase-activating protein involved in the signal transduction pathway.</text>
</comment>
<comment type="subcellular location">
    <subcellularLocation>
        <location evidence="1">Cytoplasm</location>
    </subcellularLocation>
</comment>
<evidence type="ECO:0000250" key="1"/>
<evidence type="ECO:0000255" key="2">
    <source>
        <dbReference type="PROSITE-ProRule" id="PRU00172"/>
    </source>
</evidence>
<evidence type="ECO:0000256" key="3">
    <source>
        <dbReference type="SAM" id="MobiDB-lite"/>
    </source>
</evidence>
<organism>
    <name type="scientific">Dictyostelium discoideum</name>
    <name type="common">Social amoeba</name>
    <dbReference type="NCBI Taxonomy" id="44689"/>
    <lineage>
        <taxon>Eukaryota</taxon>
        <taxon>Amoebozoa</taxon>
        <taxon>Evosea</taxon>
        <taxon>Eumycetozoa</taxon>
        <taxon>Dictyostelia</taxon>
        <taxon>Dictyosteliales</taxon>
        <taxon>Dictyosteliaceae</taxon>
        <taxon>Dictyostelium</taxon>
    </lineage>
</organism>
<gene>
    <name type="primary">gacG</name>
    <name type="ORF">DDB_G0283955</name>
</gene>
<protein>
    <recommendedName>
        <fullName>Rho GTPase-activating protein gacG</fullName>
    </recommendedName>
    <alternativeName>
        <fullName>GTPase activating factor for raC protein G</fullName>
    </alternativeName>
</protein>
<sequence length="1312" mass="147049">MASIFLNKKTIETNNFIFNDNRPKNIKIVDKIKSSTVEFFHSIQKHIQQVKVENNNNNNNNNNNSENNKYKRSQSEENINNYIQNHFNPPQPQKKRNILFIFQNLINSGNSNNNNSSNSSCNSTPSTSPSSTPRSTNSPRSTYSPRNNNNNFTESSSDNQQFDITFNMVVEKERVILTVKVPEVGLTKKILFDKVETIKDAILLVIEKLPPGCLDASEYNLFLPQKNQWCKIDSRFSKYQFKENQEIEFKKDSRGGVSHMLSNVGNLLTRPYRTIYIKLPEIVTVGTLPPLQINGQIGDLPSLNNSLNNSLNNISSSSSGGTGGGSGTTAAATGSSLSNSNSNSNLQNSQSANNSPIIHRRRTSSFSYDPNIHHSSLTHSNSNSNLISTNTSSIGNSAPSPTTLGSKPFSIPKLNLTENNLNNSSSTSSSPRNNGNEVIQSSSSTSSPRVNAPPPLEHKKSFLNIIGISPRGTNRERSSSTNSLNNSTSSLKSSNNNILQQQQQQQQHYDSAPTTPRNFGTFVRTQQLQNQQQQLQQQESIEAFDFEDDSTLGEVLNKICTRYQYIEKDLLEDYSLITKDGLWFVDRNKTITELGLKHMDEVEFKRMTQKVKVVFLNKEIVLNFNPSDTLKEINYKIIVHYLPSLIKLSRSNSILSSSSSSIFLNHQSSSSSNSSSSPSQSYRSSLSLEPLVISDLENSQILSNTPTITTVGNHQILNLQQQQNKQRSYSDASPLSFSKDYTSEISNHQQQNIENHINRRKNSISTNPLTNSGNIANNNNNNNNNKDKDDNNNNNNNNNNNNNNNNNNNNNNNNNNIASSTDTIQSNSSTGSLGSNNNIAFSIQQNRYPIPDNLVEFKDFKLHLSGTKNQNPNINQKFDMLLDERRTLSSFNFWNNIKLHFKNSSKSLHSDSKRVAPTLPFYLQIESVEQFSVSHILELEGTLLISDILKSFNRLLLNNENIKINDPLDEYGLFFNTVNNGNREGLSYGSSIYLDPYKTLSHYPMIEPLDKLMFKRTNTIFGVDPNTIVSKIDPITGFNIPCLLLDLKQKFIELDGFSIEGIFKTNNYYDLTFTEIIKEIENGTLLTSNNPNVDAIGIACFIKRWFSKLPKKICSLLDDETLLYASTQESTAEASLDSIPQPYRSLLLWLVRFLSEVSQSAYTNKCSAKILAIVIAPNLISISPNNNNNNKENNDHHHHHHHHHNSHHHRDNNNNNSNNNSSTTPTSSSVGKYTSLEKLHQCTLFLRNLIKLKLRENGFLPISTSSISISNSHNSSSFISMTGTSETSIHSSNSPISSSISRSPSLTDIVEE</sequence>
<feature type="chain" id="PRO_0000380201" description="Rho GTPase-activating protein gacG">
    <location>
        <begin position="1"/>
        <end position="1312"/>
    </location>
</feature>
<feature type="domain" description="Rho-GAP" evidence="2">
    <location>
        <begin position="1030"/>
        <end position="1212"/>
    </location>
</feature>
<feature type="region of interest" description="Disordered" evidence="3">
    <location>
        <begin position="52"/>
        <end position="74"/>
    </location>
</feature>
<feature type="region of interest" description="Disordered" evidence="3">
    <location>
        <begin position="111"/>
        <end position="158"/>
    </location>
</feature>
<feature type="region of interest" description="Disordered" evidence="3">
    <location>
        <begin position="314"/>
        <end position="519"/>
    </location>
</feature>
<feature type="region of interest" description="Disordered" evidence="3">
    <location>
        <begin position="762"/>
        <end position="831"/>
    </location>
</feature>
<feature type="region of interest" description="Disordered" evidence="3">
    <location>
        <begin position="1185"/>
        <end position="1230"/>
    </location>
</feature>
<feature type="region of interest" description="Disordered" evidence="3">
    <location>
        <begin position="1282"/>
        <end position="1312"/>
    </location>
</feature>
<feature type="compositionally biased region" description="Low complexity" evidence="3">
    <location>
        <begin position="53"/>
        <end position="67"/>
    </location>
</feature>
<feature type="compositionally biased region" description="Low complexity" evidence="3">
    <location>
        <begin position="111"/>
        <end position="146"/>
    </location>
</feature>
<feature type="compositionally biased region" description="Polar residues" evidence="3">
    <location>
        <begin position="147"/>
        <end position="158"/>
    </location>
</feature>
<feature type="compositionally biased region" description="Low complexity" evidence="3">
    <location>
        <begin position="328"/>
        <end position="355"/>
    </location>
</feature>
<feature type="compositionally biased region" description="Low complexity" evidence="3">
    <location>
        <begin position="373"/>
        <end position="397"/>
    </location>
</feature>
<feature type="compositionally biased region" description="Low complexity" evidence="3">
    <location>
        <begin position="414"/>
        <end position="436"/>
    </location>
</feature>
<feature type="compositionally biased region" description="Polar residues" evidence="3">
    <location>
        <begin position="437"/>
        <end position="449"/>
    </location>
</feature>
<feature type="compositionally biased region" description="Low complexity" evidence="3">
    <location>
        <begin position="479"/>
        <end position="507"/>
    </location>
</feature>
<feature type="compositionally biased region" description="Polar residues" evidence="3">
    <location>
        <begin position="508"/>
        <end position="518"/>
    </location>
</feature>
<feature type="compositionally biased region" description="Polar residues" evidence="3">
    <location>
        <begin position="763"/>
        <end position="776"/>
    </location>
</feature>
<feature type="compositionally biased region" description="Low complexity" evidence="3">
    <location>
        <begin position="792"/>
        <end position="816"/>
    </location>
</feature>
<feature type="compositionally biased region" description="Basic residues" evidence="3">
    <location>
        <begin position="1196"/>
        <end position="1210"/>
    </location>
</feature>
<feature type="compositionally biased region" description="Low complexity" evidence="3">
    <location>
        <begin position="1213"/>
        <end position="1222"/>
    </location>
</feature>
<feature type="compositionally biased region" description="Low complexity" evidence="3">
    <location>
        <begin position="1282"/>
        <end position="1305"/>
    </location>
</feature>
<feature type="site" description="Arginine finger; crucial for GTP hydrolysis by stabilizing the transition state" evidence="2">
    <location>
        <position position="1064"/>
    </location>
</feature>